<name>RECR_CHLAB</name>
<organism>
    <name type="scientific">Chlamydia abortus (strain DSM 27085 / S26/3)</name>
    <name type="common">Chlamydophila abortus</name>
    <dbReference type="NCBI Taxonomy" id="218497"/>
    <lineage>
        <taxon>Bacteria</taxon>
        <taxon>Pseudomonadati</taxon>
        <taxon>Chlamydiota</taxon>
        <taxon>Chlamydiia</taxon>
        <taxon>Chlamydiales</taxon>
        <taxon>Chlamydiaceae</taxon>
        <taxon>Chlamydia/Chlamydophila group</taxon>
        <taxon>Chlamydia</taxon>
    </lineage>
</organism>
<feature type="chain" id="PRO_0000190301" description="Recombination protein RecR">
    <location>
        <begin position="1"/>
        <end position="200"/>
    </location>
</feature>
<feature type="domain" description="Toprim" evidence="1">
    <location>
        <begin position="82"/>
        <end position="177"/>
    </location>
</feature>
<feature type="zinc finger region" description="C4-type" evidence="1">
    <location>
        <begin position="58"/>
        <end position="75"/>
    </location>
</feature>
<sequence length="200" mass="22315">MLKYPDYLSKLISLLRKLPGIGFKTAEKLAFELLDWDKDQLESMGKAFSELSAARSHCPTCFCLKSHPESVCSFCQNNRDTSILCIVATPKDIFSLERSQIFQGHYYVLGALLSPITGRHIDAERMHLLKQRIEFLKPKEIILALDATLEGDATALFLKQELSHSSASVSRLALGLPIGLSFDYIDSGTLARAFSGRNPY</sequence>
<comment type="function">
    <text evidence="1">May play a role in DNA repair. It seems to be involved in an RecBC-independent recombinational process of DNA repair. It may act with RecF and RecO.</text>
</comment>
<comment type="similarity">
    <text evidence="1">Belongs to the RecR family.</text>
</comment>
<accession>Q5L609</accession>
<protein>
    <recommendedName>
        <fullName evidence="1">Recombination protein RecR</fullName>
    </recommendedName>
</protein>
<dbReference type="EMBL" id="CR848038">
    <property type="protein sequence ID" value="CAH63922.1"/>
    <property type="molecule type" value="Genomic_DNA"/>
</dbReference>
<dbReference type="RefSeq" id="WP_011097098.1">
    <property type="nucleotide sequence ID" value="NC_004552.2"/>
</dbReference>
<dbReference type="SMR" id="Q5L609"/>
<dbReference type="KEGG" id="cab:CAB469"/>
<dbReference type="eggNOG" id="COG0353">
    <property type="taxonomic scope" value="Bacteria"/>
</dbReference>
<dbReference type="HOGENOM" id="CLU_060739_1_1_0"/>
<dbReference type="OrthoDB" id="9802672at2"/>
<dbReference type="Proteomes" id="UP000001012">
    <property type="component" value="Chromosome"/>
</dbReference>
<dbReference type="GO" id="GO:0003677">
    <property type="term" value="F:DNA binding"/>
    <property type="evidence" value="ECO:0007669"/>
    <property type="project" value="UniProtKB-UniRule"/>
</dbReference>
<dbReference type="GO" id="GO:0008270">
    <property type="term" value="F:zinc ion binding"/>
    <property type="evidence" value="ECO:0007669"/>
    <property type="project" value="UniProtKB-KW"/>
</dbReference>
<dbReference type="GO" id="GO:0006310">
    <property type="term" value="P:DNA recombination"/>
    <property type="evidence" value="ECO:0007669"/>
    <property type="project" value="UniProtKB-UniRule"/>
</dbReference>
<dbReference type="GO" id="GO:0006281">
    <property type="term" value="P:DNA repair"/>
    <property type="evidence" value="ECO:0007669"/>
    <property type="project" value="UniProtKB-UniRule"/>
</dbReference>
<dbReference type="CDD" id="cd01025">
    <property type="entry name" value="TOPRIM_recR"/>
    <property type="match status" value="1"/>
</dbReference>
<dbReference type="Gene3D" id="3.40.1360.10">
    <property type="match status" value="1"/>
</dbReference>
<dbReference type="Gene3D" id="1.10.8.420">
    <property type="entry name" value="RecR Domain 1"/>
    <property type="match status" value="1"/>
</dbReference>
<dbReference type="HAMAP" id="MF_00017">
    <property type="entry name" value="RecR"/>
    <property type="match status" value="1"/>
</dbReference>
<dbReference type="InterPro" id="IPR000093">
    <property type="entry name" value="DNA_Rcmb_RecR"/>
</dbReference>
<dbReference type="InterPro" id="IPR023627">
    <property type="entry name" value="Rcmb_RecR"/>
</dbReference>
<dbReference type="InterPro" id="IPR006171">
    <property type="entry name" value="TOPRIM_dom"/>
</dbReference>
<dbReference type="InterPro" id="IPR034137">
    <property type="entry name" value="TOPRIM_RecR"/>
</dbReference>
<dbReference type="NCBIfam" id="TIGR00615">
    <property type="entry name" value="recR"/>
    <property type="match status" value="1"/>
</dbReference>
<dbReference type="PANTHER" id="PTHR30446">
    <property type="entry name" value="RECOMBINATION PROTEIN RECR"/>
    <property type="match status" value="1"/>
</dbReference>
<dbReference type="PANTHER" id="PTHR30446:SF0">
    <property type="entry name" value="RECOMBINATION PROTEIN RECR"/>
    <property type="match status" value="1"/>
</dbReference>
<dbReference type="Pfam" id="PF21175">
    <property type="entry name" value="RecR_C"/>
    <property type="match status" value="1"/>
</dbReference>
<dbReference type="Pfam" id="PF21176">
    <property type="entry name" value="RecR_HhH"/>
    <property type="match status" value="1"/>
</dbReference>
<dbReference type="Pfam" id="PF13662">
    <property type="entry name" value="Toprim_4"/>
    <property type="match status" value="1"/>
</dbReference>
<dbReference type="SMART" id="SM00493">
    <property type="entry name" value="TOPRIM"/>
    <property type="match status" value="1"/>
</dbReference>
<dbReference type="SUPFAM" id="SSF111304">
    <property type="entry name" value="Recombination protein RecR"/>
    <property type="match status" value="1"/>
</dbReference>
<dbReference type="PROSITE" id="PS50880">
    <property type="entry name" value="TOPRIM"/>
    <property type="match status" value="1"/>
</dbReference>
<proteinExistence type="inferred from homology"/>
<gene>
    <name evidence="1" type="primary">recR</name>
    <name type="ordered locus">CAB469</name>
</gene>
<keyword id="KW-0227">DNA damage</keyword>
<keyword id="KW-0233">DNA recombination</keyword>
<keyword id="KW-0234">DNA repair</keyword>
<keyword id="KW-0479">Metal-binding</keyword>
<keyword id="KW-0862">Zinc</keyword>
<keyword id="KW-0863">Zinc-finger</keyword>
<evidence type="ECO:0000255" key="1">
    <source>
        <dbReference type="HAMAP-Rule" id="MF_00017"/>
    </source>
</evidence>
<reference key="1">
    <citation type="journal article" date="2005" name="Genome Res.">
        <title>The Chlamydophila abortus genome sequence reveals an array of variable proteins that contribute to interspecies variation.</title>
        <authorList>
            <person name="Thomson N.R."/>
            <person name="Yeats C."/>
            <person name="Bell K."/>
            <person name="Holden M.T.G."/>
            <person name="Bentley S.D."/>
            <person name="Livingstone M."/>
            <person name="Cerdeno-Tarraga A.-M."/>
            <person name="Harris B."/>
            <person name="Doggett J."/>
            <person name="Ormond D."/>
            <person name="Mungall K."/>
            <person name="Clarke K."/>
            <person name="Feltwell T."/>
            <person name="Hance Z."/>
            <person name="Sanders M."/>
            <person name="Quail M.A."/>
            <person name="Price C."/>
            <person name="Barrell B.G."/>
            <person name="Parkhill J."/>
            <person name="Longbottom D."/>
        </authorList>
    </citation>
    <scope>NUCLEOTIDE SEQUENCE [LARGE SCALE GENOMIC DNA]</scope>
    <source>
        <strain>DSM 27085 / S26/3</strain>
    </source>
</reference>